<keyword id="KW-0027">Amidation</keyword>
<keyword id="KW-0878">Amphibian defense peptide</keyword>
<keyword id="KW-0208">D-amino acid</keyword>
<keyword id="KW-0903">Direct protein sequencing</keyword>
<keyword id="KW-0257">Endorphin</keyword>
<keyword id="KW-0555">Opioid peptide</keyword>
<keyword id="KW-0964">Secreted</keyword>
<protein>
    <recommendedName>
        <fullName>[D-Met2]-deltorphin</fullName>
    </recommendedName>
</protein>
<dbReference type="GO" id="GO:0005576">
    <property type="term" value="C:extracellular region"/>
    <property type="evidence" value="ECO:0007669"/>
    <property type="project" value="UniProtKB-SubCell"/>
</dbReference>
<dbReference type="GO" id="GO:0001515">
    <property type="term" value="F:opioid peptide activity"/>
    <property type="evidence" value="ECO:0007669"/>
    <property type="project" value="UniProtKB-KW"/>
</dbReference>
<dbReference type="GO" id="GO:0006952">
    <property type="term" value="P:defense response"/>
    <property type="evidence" value="ECO:0007669"/>
    <property type="project" value="UniProtKB-KW"/>
</dbReference>
<dbReference type="GO" id="GO:0007218">
    <property type="term" value="P:neuropeptide signaling pathway"/>
    <property type="evidence" value="ECO:0007669"/>
    <property type="project" value="UniProtKB-KW"/>
</dbReference>
<sequence>YMFHLMD</sequence>
<feature type="peptide" id="PRO_0000404605" description="[D-Met2]-deltorphin">
    <location>
        <begin position="1"/>
        <end position="7"/>
    </location>
</feature>
<feature type="modified residue" description="D-methionine" evidence="1">
    <location>
        <position position="2"/>
    </location>
</feature>
<feature type="modified residue" description="Aspartic acid 1-amide" evidence="3">
    <location>
        <position position="7"/>
    </location>
</feature>
<feature type="unsure residue" description="L or I" evidence="3">
    <location>
        <position position="5"/>
    </location>
</feature>
<proteinExistence type="evidence at protein level"/>
<accession>P86634</accession>
<evidence type="ECO:0000250" key="1">
    <source>
        <dbReference type="UniProtKB" id="P05422"/>
    </source>
</evidence>
<evidence type="ECO:0000255" key="2"/>
<evidence type="ECO:0000269" key="3">
    <source>
    </source>
</evidence>
<evidence type="ECO:0000305" key="4"/>
<comment type="function">
    <text evidence="1">Has a very potent opiate-like activity. It has high affinity and selectivity for delta-type opioid receptors (By similarity).</text>
</comment>
<comment type="subcellular location">
    <subcellularLocation>
        <location evidence="3">Secreted</location>
    </subcellularLocation>
</comment>
<comment type="tissue specificity">
    <text evidence="3">Expressed by the skin glands.</text>
</comment>
<comment type="mass spectrometry"/>
<comment type="similarity">
    <text evidence="2">Belongs to the frog skin active peptide (FSAP) family. Dermorphin subfamily.</text>
</comment>
<reference evidence="4" key="1">
    <citation type="journal article" date="2011" name="Toxicon">
        <title>Peptidomic dissection of the skin secretion of Phasmahyla jandaia (Bokermann and Sazima, 1978) (Anura, Hylidae, Phyllomedusinae).</title>
        <authorList>
            <person name="Rates B."/>
            <person name="Silva L.P."/>
            <person name="Ireno I.C."/>
            <person name="Leite F.S."/>
            <person name="Borges M.H."/>
            <person name="Bloch C. Jr."/>
            <person name="De Lima M.E."/>
            <person name="Pimenta A.M."/>
        </authorList>
    </citation>
    <scope>PROTEIN SEQUENCE</scope>
    <scope>SUBCELLULAR LOCATION</scope>
    <scope>TISSUE SPECIFICITY</scope>
    <scope>MASS SPECTROMETRY</scope>
    <scope>AMIDATION AT ASP-7</scope>
    <source>
        <tissue evidence="3">Skin secretion</tissue>
    </source>
</reference>
<organism>
    <name type="scientific">Phasmahyla jandaia</name>
    <name type="common">Jandaia leaf frog</name>
    <name type="synonym">Phyllomedusa jandaia</name>
    <dbReference type="NCBI Taxonomy" id="762504"/>
    <lineage>
        <taxon>Eukaryota</taxon>
        <taxon>Metazoa</taxon>
        <taxon>Chordata</taxon>
        <taxon>Craniata</taxon>
        <taxon>Vertebrata</taxon>
        <taxon>Euteleostomi</taxon>
        <taxon>Amphibia</taxon>
        <taxon>Batrachia</taxon>
        <taxon>Anura</taxon>
        <taxon>Neobatrachia</taxon>
        <taxon>Hyloidea</taxon>
        <taxon>Hylidae</taxon>
        <taxon>Phyllomedusinae</taxon>
        <taxon>Phasmahyla</taxon>
    </lineage>
</organism>
<name>DELT_PHAJA</name>